<organism>
    <name type="scientific">Mus musculus</name>
    <name type="common">Mouse</name>
    <dbReference type="NCBI Taxonomy" id="10090"/>
    <lineage>
        <taxon>Eukaryota</taxon>
        <taxon>Metazoa</taxon>
        <taxon>Chordata</taxon>
        <taxon>Craniata</taxon>
        <taxon>Vertebrata</taxon>
        <taxon>Euteleostomi</taxon>
        <taxon>Mammalia</taxon>
        <taxon>Eutheria</taxon>
        <taxon>Euarchontoglires</taxon>
        <taxon>Glires</taxon>
        <taxon>Rodentia</taxon>
        <taxon>Myomorpha</taxon>
        <taxon>Muroidea</taxon>
        <taxon>Muridae</taxon>
        <taxon>Murinae</taxon>
        <taxon>Mus</taxon>
        <taxon>Mus</taxon>
    </lineage>
</organism>
<sequence length="276" mass="31386">MSLCEDMLLCNYRKCRIKLSGYAWVTACSHIFCDQHGSGEFSRSPAICPACNSTLSGKLDIVRTELSPSEEYKAMVLAGLRPEVVLDISSRALAFWTYQVHQERLYQEYNFSKAENHLKQMEKMYMQQIQSKNIELTSMKGEVISMKKVLEEYKKKFSDISEKLMERNRQYQKLQGLYDSLRLRNITIASQEGSLEPGMIPQSGVFGFPPGNNSKFSLDHIPVGNQGGGDEDVQFRPFFVCSPTAPEPINNFFSFASPSHEAEQQVCSRAFKAKRI</sequence>
<proteinExistence type="evidence at protein level"/>
<reference key="1">
    <citation type="journal article" date="2009" name="PLoS Biol.">
        <title>Lineage-specific biology revealed by a finished genome assembly of the mouse.</title>
        <authorList>
            <person name="Church D.M."/>
            <person name="Goodstadt L."/>
            <person name="Hillier L.W."/>
            <person name="Zody M.C."/>
            <person name="Goldstein S."/>
            <person name="She X."/>
            <person name="Bult C.J."/>
            <person name="Agarwala R."/>
            <person name="Cherry J.L."/>
            <person name="DiCuccio M."/>
            <person name="Hlavina W."/>
            <person name="Kapustin Y."/>
            <person name="Meric P."/>
            <person name="Maglott D."/>
            <person name="Birtle Z."/>
            <person name="Marques A.C."/>
            <person name="Graves T."/>
            <person name="Zhou S."/>
            <person name="Teague B."/>
            <person name="Potamousis K."/>
            <person name="Churas C."/>
            <person name="Place M."/>
            <person name="Herschleb J."/>
            <person name="Runnheim R."/>
            <person name="Forrest D."/>
            <person name="Amos-Landgraf J."/>
            <person name="Schwartz D.C."/>
            <person name="Cheng Z."/>
            <person name="Lindblad-Toh K."/>
            <person name="Eichler E.E."/>
            <person name="Ponting C.P."/>
        </authorList>
    </citation>
    <scope>NUCLEOTIDE SEQUENCE [LARGE SCALE GENOMIC DNA]</scope>
    <source>
        <strain>C57BL/6J</strain>
    </source>
</reference>
<reference key="2">
    <citation type="submission" date="2005-07" db="EMBL/GenBank/DDBJ databases">
        <authorList>
            <person name="Mural R.J."/>
            <person name="Adams M.D."/>
            <person name="Myers E.W."/>
            <person name="Smith H.O."/>
            <person name="Venter J.C."/>
        </authorList>
    </citation>
    <scope>NUCLEOTIDE SEQUENCE [LARGE SCALE GENOMIC DNA]</scope>
</reference>
<reference key="3">
    <citation type="journal article" date="2007" name="PLoS Genet.">
        <title>Mutation in mouse hei10, an e3 ubiquitin ligase, disrupts meiotic crossing over.</title>
        <authorList>
            <person name="Ward J.O."/>
            <person name="Reinholdt L.G."/>
            <person name="Motley W.W."/>
            <person name="Niswander L.M."/>
            <person name="Deacon D.C."/>
            <person name="Griffin L.B."/>
            <person name="Langlais K.K."/>
            <person name="Backus V.L."/>
            <person name="Schimenti K.J."/>
            <person name="O'Brien M.J."/>
            <person name="Eppig J.J."/>
            <person name="Schimenti J.C."/>
        </authorList>
    </citation>
    <scope>FUNCTION</scope>
    <scope>TISSUE SPECIFICITY</scope>
    <scope>DISRUPTION PHENOTYPE</scope>
    <scope>MUTAGENESIS OF 77-LEU--VAL-110</scope>
</reference>
<reference key="4">
    <citation type="journal article" date="2010" name="Genes (Basel)">
        <title>Evidence implicating CCNB1IP1, a RING domain-containing protein required for meiotic crossing over in mice, as an E3 SUMO ligase.</title>
        <authorList>
            <person name="Strong E.R."/>
            <person name="Schimenti J.C."/>
        </authorList>
    </citation>
    <scope>DEVELOPMENTAL STAGE</scope>
</reference>
<reference key="5">
    <citation type="journal article" date="2014" name="Nat. Genet.">
        <title>Antagonistic roles of ubiquitin ligase HEI10 and SUMO ligase RNF212 regulate meiotic recombination.</title>
        <authorList>
            <person name="Qiao H."/>
            <person name="Prasada Rao H.B."/>
            <person name="Yang Y."/>
            <person name="Fong J.H."/>
            <person name="Cloutier J.M."/>
            <person name="Deacon D.C."/>
            <person name="Nagel K.E."/>
            <person name="Swartz R.K."/>
            <person name="Strong E."/>
            <person name="Holloway J.K."/>
            <person name="Cohen P.E."/>
            <person name="Schimenti J."/>
            <person name="Ward J."/>
            <person name="Hunter N."/>
        </authorList>
    </citation>
    <scope>FUNCTION</scope>
    <scope>SUBCELLULAR LOCATION</scope>
    <scope>DEVELOPMENTAL STAGE</scope>
    <scope>DISRUPTION PHENOTYPE</scope>
</reference>
<accession>D3Z3K2</accession>
<gene>
    <name type="primary">Ccnb1ip1</name>
    <name type="synonym">Gm288</name>
    <name type="synonym">Hei10</name>
    <name type="synonym">Mei4</name>
</gene>
<comment type="function">
    <text evidence="4 6">Ubiquitin E3 ligase that acts as a limiting factor for crossing-over during meiosis: required during zygonema to limit the colocalization of RNF212 with MutS-gamma-associated recombination sites and thereby establish early differentiation of crossover and non-crossover sites. Later, it is directed by MutL-gamma to stably accumulate at designated crossover sites. Probably promotes the dissociation of RNF212 and MutS-gamma to allow the progression of recombination and the implementation of the final steps of crossing over. Modulates cyclin-B levels and participates in the regulation of cell cycle progression through the G2 phase. Overexpression causes delayed entry into mitosis.</text>
</comment>
<comment type="catalytic activity">
    <reaction evidence="2">
        <text>S-ubiquitinyl-[E2 ubiquitin-conjugating enzyme]-L-cysteine + [acceptor protein]-L-lysine = [E2 ubiquitin-conjugating enzyme]-L-cysteine + N(6)-ubiquitinyl-[acceptor protein]-L-lysine.</text>
        <dbReference type="EC" id="2.3.2.27"/>
    </reaction>
</comment>
<comment type="pathway">
    <text>Protein modification; protein ubiquitination.</text>
</comment>
<comment type="subunit">
    <text evidence="1">Interacts with CCNB1, UBE2L3 and NF2.</text>
</comment>
<comment type="subcellular location">
    <subcellularLocation>
        <location evidence="6">Nucleus</location>
    </subcellularLocation>
    <subcellularLocation>
        <location evidence="6">Chromosome</location>
    </subcellularLocation>
    <text>Associates to the synaptonemal complex.</text>
</comment>
<comment type="tissue specificity">
    <text evidence="4">Expressed predominantly in the testes and 17 day embryos (corresponding to prophase I in females). Weakly or not expressed in other tissues.</text>
</comment>
<comment type="developmental stage">
    <text evidence="5 6">In spermatocytes, synaptonemal complex-associated Ccnb1ip1 foci are detected by early pachynema and their number peaks during midpachynema. In late-pachytene nuclei, Ccnb1ip1 foci number descrease. At the onset of diplonema, foci are no longer detected (at protein level).</text>
</comment>
<comment type="PTM">
    <text evidence="1">Ubiquitinated; autoubiquitinated.</text>
</comment>
<comment type="PTM">
    <text evidence="1">Phosphorylated by CDK1 on serine or threonine residues (in vitro).</text>
</comment>
<comment type="disruption phenotype">
    <text evidence="4 6">Both male and female mice are sterile. Males do not make sperm and have much smaller testes, a characteristic of mutants with meiotic defects. Early stages of meiosis occur normally and full synapsis of homologous chromosomes (homologs) is achieved. However, crossover-specific recombination complexes do not assemble and crossing-overs fail. In spermatocytes, chromosomes fail to congress properly at the metaphase plate, leading to arrest and apoptosis before the first meiotic division. Mutant oocytes have a similar chromosomal phenotype but can undergo meiotic divisions and fertilization before arresting. During late meiotic prophase males, absence of Cdk2 and mismatch repair protein association from chromosome cores is correlated with the premature separation of bivalents at diplonema owing to lack of chiasmata.</text>
</comment>
<keyword id="KW-0158">Chromosome</keyword>
<keyword id="KW-0175">Coiled coil</keyword>
<keyword id="KW-0469">Meiosis</keyword>
<keyword id="KW-0479">Metal-binding</keyword>
<keyword id="KW-0539">Nucleus</keyword>
<keyword id="KW-1185">Reference proteome</keyword>
<keyword id="KW-0808">Transferase</keyword>
<keyword id="KW-0832">Ubl conjugation</keyword>
<keyword id="KW-0833">Ubl conjugation pathway</keyword>
<keyword id="KW-0862">Zinc</keyword>
<keyword id="KW-0863">Zinc-finger</keyword>
<dbReference type="EC" id="2.3.2.27" evidence="2"/>
<dbReference type="EMBL" id="AC027184">
    <property type="status" value="NOT_ANNOTATED_CDS"/>
    <property type="molecule type" value="Genomic_DNA"/>
</dbReference>
<dbReference type="EMBL" id="CH466605">
    <property type="protein sequence ID" value="EDL20823.1"/>
    <property type="molecule type" value="Genomic_DNA"/>
</dbReference>
<dbReference type="CCDS" id="CCDS49477.1"/>
<dbReference type="RefSeq" id="NP_001104589.1">
    <property type="nucleotide sequence ID" value="NM_001111119.1"/>
</dbReference>
<dbReference type="SMR" id="D3Z3K2"/>
<dbReference type="BioGRID" id="232042">
    <property type="interactions" value="36"/>
</dbReference>
<dbReference type="FunCoup" id="D3Z3K2">
    <property type="interactions" value="65"/>
</dbReference>
<dbReference type="STRING" id="10090.ENSMUSP00000093622"/>
<dbReference type="PhosphoSitePlus" id="D3Z3K2"/>
<dbReference type="PaxDb" id="10090-ENSMUSP00000093622"/>
<dbReference type="ProteomicsDB" id="283920"/>
<dbReference type="Antibodypedia" id="22006">
    <property type="antibodies" value="226 antibodies from 26 providers"/>
</dbReference>
<dbReference type="Ensembl" id="ENSMUST00000095932.5">
    <property type="protein sequence ID" value="ENSMUSP00000093622.4"/>
    <property type="gene ID" value="ENSMUSG00000071470.5"/>
</dbReference>
<dbReference type="GeneID" id="239083"/>
<dbReference type="KEGG" id="mmu:239083"/>
<dbReference type="UCSC" id="uc011zjw.1">
    <property type="organism name" value="mouse"/>
</dbReference>
<dbReference type="AGR" id="MGI:2685134"/>
<dbReference type="CTD" id="57820"/>
<dbReference type="MGI" id="MGI:2685134">
    <property type="gene designation" value="Ccnb1ip1"/>
</dbReference>
<dbReference type="VEuPathDB" id="HostDB:ENSMUSG00000071470"/>
<dbReference type="eggNOG" id="ENOG502RMFV">
    <property type="taxonomic scope" value="Eukaryota"/>
</dbReference>
<dbReference type="GeneTree" id="ENSGT00390000002849"/>
<dbReference type="HOGENOM" id="CLU_049340_3_0_1"/>
<dbReference type="InParanoid" id="D3Z3K2"/>
<dbReference type="OMA" id="HFRPFFV"/>
<dbReference type="OrthoDB" id="441210at2759"/>
<dbReference type="PhylomeDB" id="D3Z3K2"/>
<dbReference type="TreeFam" id="TF328863"/>
<dbReference type="UniPathway" id="UPA00143"/>
<dbReference type="BioGRID-ORCS" id="239083">
    <property type="hits" value="3 hits in 78 CRISPR screens"/>
</dbReference>
<dbReference type="ChiTaRS" id="Ccnb1ip1">
    <property type="organism name" value="mouse"/>
</dbReference>
<dbReference type="PRO" id="PR:D3Z3K2"/>
<dbReference type="Proteomes" id="UP000000589">
    <property type="component" value="Chromosome 14"/>
</dbReference>
<dbReference type="RNAct" id="D3Z3K2">
    <property type="molecule type" value="protein"/>
</dbReference>
<dbReference type="Bgee" id="ENSMUSG00000071470">
    <property type="expression patterns" value="Expressed in ectoplacental cone and 121 other cell types or tissues"/>
</dbReference>
<dbReference type="ExpressionAtlas" id="D3Z3K2">
    <property type="expression patterns" value="baseline and differential"/>
</dbReference>
<dbReference type="GO" id="GO:0000794">
    <property type="term" value="C:condensed nuclear chromosome"/>
    <property type="evidence" value="ECO:0000314"/>
    <property type="project" value="MGI"/>
</dbReference>
<dbReference type="GO" id="GO:0000795">
    <property type="term" value="C:synaptonemal complex"/>
    <property type="evidence" value="ECO:0007669"/>
    <property type="project" value="InterPro"/>
</dbReference>
<dbReference type="GO" id="GO:0042802">
    <property type="term" value="F:identical protein binding"/>
    <property type="evidence" value="ECO:0007669"/>
    <property type="project" value="Ensembl"/>
</dbReference>
<dbReference type="GO" id="GO:0061630">
    <property type="term" value="F:ubiquitin protein ligase activity"/>
    <property type="evidence" value="ECO:0000304"/>
    <property type="project" value="MGI"/>
</dbReference>
<dbReference type="GO" id="GO:0004842">
    <property type="term" value="F:ubiquitin-protein transferase activity"/>
    <property type="evidence" value="ECO:0000304"/>
    <property type="project" value="UniProtKB"/>
</dbReference>
<dbReference type="GO" id="GO:0008270">
    <property type="term" value="F:zinc ion binding"/>
    <property type="evidence" value="ECO:0007669"/>
    <property type="project" value="UniProtKB-KW"/>
</dbReference>
<dbReference type="GO" id="GO:0001825">
    <property type="term" value="P:blastocyst formation"/>
    <property type="evidence" value="ECO:0000315"/>
    <property type="project" value="MGI"/>
</dbReference>
<dbReference type="GO" id="GO:0051026">
    <property type="term" value="P:chiasma assembly"/>
    <property type="evidence" value="ECO:0000315"/>
    <property type="project" value="UniProtKB"/>
</dbReference>
<dbReference type="GO" id="GO:0016567">
    <property type="term" value="P:protein ubiquitination"/>
    <property type="evidence" value="ECO:0000304"/>
    <property type="project" value="UniProtKB"/>
</dbReference>
<dbReference type="GO" id="GO:0007131">
    <property type="term" value="P:reciprocal meiotic recombination"/>
    <property type="evidence" value="ECO:0000315"/>
    <property type="project" value="UniProtKB"/>
</dbReference>
<dbReference type="GO" id="GO:0007286">
    <property type="term" value="P:spermatid development"/>
    <property type="evidence" value="ECO:0000315"/>
    <property type="project" value="MGI"/>
</dbReference>
<dbReference type="InterPro" id="IPR042448">
    <property type="entry name" value="CCNB1IP1"/>
</dbReference>
<dbReference type="InterPro" id="IPR001841">
    <property type="entry name" value="Znf_RING"/>
</dbReference>
<dbReference type="PANTHER" id="PTHR14305">
    <property type="entry name" value="E3 UBIQUITIN-PROTEIN LIGASE CCNB1IP1"/>
    <property type="match status" value="1"/>
</dbReference>
<dbReference type="PANTHER" id="PTHR14305:SF0">
    <property type="entry name" value="E3 UBIQUITIN-PROTEIN LIGASE CCNB1IP1"/>
    <property type="match status" value="1"/>
</dbReference>
<dbReference type="Pfam" id="PF14634">
    <property type="entry name" value="zf-RING_5"/>
    <property type="match status" value="1"/>
</dbReference>
<feature type="chain" id="PRO_0000425901" description="E3 ubiquitin-protein ligase CCNB1IP1">
    <location>
        <begin position="1"/>
        <end position="276"/>
    </location>
</feature>
<feature type="zinc finger region" description="RING-type; atypical">
    <location>
        <begin position="10"/>
        <end position="52"/>
    </location>
</feature>
<feature type="coiled-coil region" evidence="3">
    <location>
        <begin position="146"/>
        <end position="182"/>
    </location>
</feature>
<feature type="mutagenesis site" description="In mei4; Sterility in both sexes due to meiotic defects.">
    <location>
        <begin position="77"/>
        <end position="100"/>
    </location>
</feature>
<protein>
    <recommendedName>
        <fullName>E3 ubiquitin-protein ligase CCNB1IP1</fullName>
        <ecNumber evidence="2">2.3.2.27</ecNumber>
    </recommendedName>
    <alternativeName>
        <fullName>Cyclin-B1-interacting protein 1</fullName>
    </alternativeName>
    <alternativeName>
        <fullName evidence="7">RING-type E3 ubiquitin transferase CCNB1IP1</fullName>
    </alternativeName>
</protein>
<name>CIP1_MOUSE</name>
<evidence type="ECO:0000250" key="1"/>
<evidence type="ECO:0000250" key="2">
    <source>
        <dbReference type="UniProtKB" id="Q9NPC3"/>
    </source>
</evidence>
<evidence type="ECO:0000255" key="3"/>
<evidence type="ECO:0000269" key="4">
    <source>
    </source>
</evidence>
<evidence type="ECO:0000269" key="5">
    <source>
    </source>
</evidence>
<evidence type="ECO:0000269" key="6">
    <source>
    </source>
</evidence>
<evidence type="ECO:0000305" key="7"/>